<name>RFRNP_NITOC</name>
<sequence length="198" mass="22859">MERFILDTSVFTNPDTFNQFARDAVEATRIFLQLARRADAEFFIPGSVYEEFRLMKDLASLGGDFESVVKIRSPRRYSLTIPSEFLYELIHEVRHRIDRGLRIAEEHARMAAQPGTVADQGALITRLRERYRETLRRGIVDSREDIDVLLLAYELDGVLLSADEGLRKWADKVGVKIILPQHLRRVLENLTSCSRPQK</sequence>
<reference key="1">
    <citation type="journal article" date="2006" name="Appl. Environ. Microbiol.">
        <title>Complete genome sequence of the marine, chemolithoautotrophic, ammonia-oxidizing bacterium Nitrosococcus oceani ATCC 19707.</title>
        <authorList>
            <person name="Klotz M.G."/>
            <person name="Arp D.J."/>
            <person name="Chain P.S.G."/>
            <person name="El-Sheikh A.F."/>
            <person name="Hauser L.J."/>
            <person name="Hommes N.G."/>
            <person name="Larimer F.W."/>
            <person name="Malfatti S.A."/>
            <person name="Norton J.M."/>
            <person name="Poret-Peterson A.T."/>
            <person name="Vergez L.M."/>
            <person name="Ward B.B."/>
        </authorList>
    </citation>
    <scope>NUCLEOTIDE SEQUENCE [LARGE SCALE GENOMIC DNA]</scope>
    <source>
        <strain>ATCC 19707 / BCRC 17464 / JCM 30415 / NCIMB 11848 / C-107</strain>
    </source>
</reference>
<keyword id="KW-0255">Endonuclease</keyword>
<keyword id="KW-0378">Hydrolase</keyword>
<keyword id="KW-0540">Nuclease</keyword>
<keyword id="KW-1185">Reference proteome</keyword>
<keyword id="KW-0819">tRNA processing</keyword>
<feature type="chain" id="PRO_0000366689" description="RNA-free ribonuclease P">
    <location>
        <begin position="1"/>
        <end position="198"/>
    </location>
</feature>
<comment type="function">
    <text evidence="1">RNA-free RNase P that catalyzes the removal of the 5'-leader sequence from pre-tRNA to produce the mature 5'-terminus.</text>
</comment>
<comment type="catalytic activity">
    <reaction evidence="1">
        <text>Endonucleolytic cleavage of RNA, removing 5'-extranucleotides from tRNA precursor.</text>
        <dbReference type="EC" id="3.1.26.5"/>
    </reaction>
</comment>
<comment type="similarity">
    <text evidence="1">Belongs to the HARP family.</text>
</comment>
<accession>Q3JB93</accession>
<evidence type="ECO:0000255" key="1">
    <source>
        <dbReference type="HAMAP-Rule" id="MF_01078"/>
    </source>
</evidence>
<proteinExistence type="inferred from homology"/>
<protein>
    <recommendedName>
        <fullName evidence="1">RNA-free ribonuclease P</fullName>
        <shortName evidence="1">RNA-free RNase P</shortName>
        <ecNumber evidence="1">3.1.26.5</ecNumber>
    </recommendedName>
    <alternativeName>
        <fullName evidence="1">Protein-only RNase P</fullName>
    </alternativeName>
</protein>
<dbReference type="EC" id="3.1.26.5" evidence="1"/>
<dbReference type="EMBL" id="CP000127">
    <property type="protein sequence ID" value="ABA57903.1"/>
    <property type="molecule type" value="Genomic_DNA"/>
</dbReference>
<dbReference type="RefSeq" id="WP_002809561.1">
    <property type="nucleotide sequence ID" value="NC_007484.1"/>
</dbReference>
<dbReference type="SMR" id="Q3JB93"/>
<dbReference type="STRING" id="323261.Noc_1414"/>
<dbReference type="KEGG" id="noc:Noc_1414"/>
<dbReference type="eggNOG" id="COG1458">
    <property type="taxonomic scope" value="Bacteria"/>
</dbReference>
<dbReference type="HOGENOM" id="CLU_109672_0_0_6"/>
<dbReference type="InParanoid" id="Q3JB93"/>
<dbReference type="Proteomes" id="UP000006838">
    <property type="component" value="Chromosome"/>
</dbReference>
<dbReference type="GO" id="GO:0004526">
    <property type="term" value="F:ribonuclease P activity"/>
    <property type="evidence" value="ECO:0007669"/>
    <property type="project" value="UniProtKB-UniRule"/>
</dbReference>
<dbReference type="GO" id="GO:0001682">
    <property type="term" value="P:tRNA 5'-leader removal"/>
    <property type="evidence" value="ECO:0007669"/>
    <property type="project" value="UniProtKB-UniRule"/>
</dbReference>
<dbReference type="CDD" id="cd18691">
    <property type="entry name" value="PIN_VapC-like"/>
    <property type="match status" value="1"/>
</dbReference>
<dbReference type="HAMAP" id="MF_01078">
    <property type="entry name" value="RNA_free_RNase_P"/>
    <property type="match status" value="1"/>
</dbReference>
<dbReference type="InterPro" id="IPR029060">
    <property type="entry name" value="PIN-like_dom_sf"/>
</dbReference>
<dbReference type="InterPro" id="IPR014856">
    <property type="entry name" value="RNA_free_RNase_P"/>
</dbReference>
<dbReference type="NCBIfam" id="NF003344">
    <property type="entry name" value="PRK04358.1-5"/>
    <property type="match status" value="1"/>
</dbReference>
<dbReference type="NCBIfam" id="TIGR03875">
    <property type="entry name" value="RNA_lig_partner"/>
    <property type="match status" value="1"/>
</dbReference>
<dbReference type="PANTHER" id="PTHR41173:SF1">
    <property type="entry name" value="RNA-FREE RIBONUCLEASE P"/>
    <property type="match status" value="1"/>
</dbReference>
<dbReference type="PANTHER" id="PTHR41173">
    <property type="entry name" value="UPF0278 PROTEIN TK1425"/>
    <property type="match status" value="1"/>
</dbReference>
<dbReference type="Pfam" id="PF08745">
    <property type="entry name" value="PIN_5"/>
    <property type="match status" value="1"/>
</dbReference>
<dbReference type="SUPFAM" id="SSF88723">
    <property type="entry name" value="PIN domain-like"/>
    <property type="match status" value="1"/>
</dbReference>
<gene>
    <name type="ordered locus">Noc_1414</name>
</gene>
<organism>
    <name type="scientific">Nitrosococcus oceani (strain ATCC 19707 / BCRC 17464 / JCM 30415 / NCIMB 11848 / C-107)</name>
    <dbReference type="NCBI Taxonomy" id="323261"/>
    <lineage>
        <taxon>Bacteria</taxon>
        <taxon>Pseudomonadati</taxon>
        <taxon>Pseudomonadota</taxon>
        <taxon>Gammaproteobacteria</taxon>
        <taxon>Chromatiales</taxon>
        <taxon>Chromatiaceae</taxon>
        <taxon>Nitrosococcus</taxon>
    </lineage>
</organism>